<feature type="chain" id="PRO_0000151662" description="Probable arginine--tRNA ligase, cytoplasmic">
    <location>
        <begin position="1"/>
        <end position="665"/>
    </location>
</feature>
<feature type="region of interest" description="Interaction with tRNA" evidence="3">
    <location>
        <begin position="535"/>
        <end position="549"/>
    </location>
</feature>
<feature type="short sequence motif" description="'HIGH' region">
    <location>
        <begin position="205"/>
        <end position="216"/>
    </location>
</feature>
<feature type="binding site" evidence="2">
    <location>
        <begin position="204"/>
        <end position="206"/>
    </location>
    <ligand>
        <name>L-arginine</name>
        <dbReference type="ChEBI" id="CHEBI:32682"/>
    </ligand>
</feature>
<feature type="binding site" evidence="2">
    <location>
        <position position="215"/>
    </location>
    <ligand>
        <name>L-arginine</name>
        <dbReference type="ChEBI" id="CHEBI:32682"/>
    </ligand>
</feature>
<feature type="binding site" evidence="2">
    <location>
        <position position="390"/>
    </location>
    <ligand>
        <name>L-arginine</name>
        <dbReference type="ChEBI" id="CHEBI:32682"/>
    </ligand>
</feature>
<feature type="binding site" evidence="2">
    <location>
        <position position="394"/>
    </location>
    <ligand>
        <name>L-arginine</name>
        <dbReference type="ChEBI" id="CHEBI:32682"/>
    </ligand>
</feature>
<feature type="binding site" evidence="2">
    <location>
        <position position="418"/>
    </location>
    <ligand>
        <name>L-arginine</name>
        <dbReference type="ChEBI" id="CHEBI:32682"/>
    </ligand>
</feature>
<gene>
    <name evidence="5" type="primary">ArgRS</name>
    <name evidence="5" type="synonym">Aats-arg</name>
    <name evidence="5" type="ORF">CG9020</name>
</gene>
<sequence length="665" mass="75577">MSELNMELKKLRELELKTQGLAARIQTAKSGEQLDVDLVQLQIENKKLKNRLFILKKSIAEESTAAGGDVSKPKESSSITEHLESVFRQAIASAFPEFRDTPVIIAPVNSTSAKFGDYQCNNAMGLSKKLKEKGINKAPRDIATELKGHCPASPIIEKLEIAGAGFVNVFLSKDYASLALSNLLRNGVKPPEVIKKRVLVDFSSPNIAKQMHVGHLRSTIIGESLCRLLEFLQHDVIRINHLGDWGTQFGMLIAHLEDRFPNYLNESPPISDLQLFYKESKKRFDEDEEFKKRAYSRVVSLQKGVPNSIKAWELICNVSRKEFQTIYERLDISVKERGESFYQSRMLSVVEYLRGKGLLEVDEGREIMWPDDTKTGIPLTIVKSDGGFTYDTSDMAAIRHRLEEELCDWIIYVVDSGQSTHFNTIFKAAERSAILNPLSHRVDHVQFGVVLGEDGKKFKTRSGDTVKLSDLLDEGMKRSLQQLESRGRDKVLTPQELKDAQESLAYGCIKYSDLCHNRISDYIFSFDKMLEDRGNTAVYLLYTYTRICSIARNSGEDFTNLPEILKKTNIVLDHEKEWKLAKTLLKLHDILIKCSKELFLHFLCEFCFEVCTVFTEFYDSCYCIEKNKQGDIIGVNHSRILLCEATAAVLRQCFYILGLKPVSKM</sequence>
<keyword id="KW-0030">Aminoacyl-tRNA synthetase</keyword>
<keyword id="KW-0067">ATP-binding</keyword>
<keyword id="KW-0963">Cytoplasm</keyword>
<keyword id="KW-0436">Ligase</keyword>
<keyword id="KW-0547">Nucleotide-binding</keyword>
<keyword id="KW-0648">Protein biosynthesis</keyword>
<keyword id="KW-1185">Reference proteome</keyword>
<reference key="1">
    <citation type="journal article" date="2000" name="Science">
        <title>The genome sequence of Drosophila melanogaster.</title>
        <authorList>
            <person name="Adams M.D."/>
            <person name="Celniker S.E."/>
            <person name="Holt R.A."/>
            <person name="Evans C.A."/>
            <person name="Gocayne J.D."/>
            <person name="Amanatides P.G."/>
            <person name="Scherer S.E."/>
            <person name="Li P.W."/>
            <person name="Hoskins R.A."/>
            <person name="Galle R.F."/>
            <person name="George R.A."/>
            <person name="Lewis S.E."/>
            <person name="Richards S."/>
            <person name="Ashburner M."/>
            <person name="Henderson S.N."/>
            <person name="Sutton G.G."/>
            <person name="Wortman J.R."/>
            <person name="Yandell M.D."/>
            <person name="Zhang Q."/>
            <person name="Chen L.X."/>
            <person name="Brandon R.C."/>
            <person name="Rogers Y.-H.C."/>
            <person name="Blazej R.G."/>
            <person name="Champe M."/>
            <person name="Pfeiffer B.D."/>
            <person name="Wan K.H."/>
            <person name="Doyle C."/>
            <person name="Baxter E.G."/>
            <person name="Helt G."/>
            <person name="Nelson C.R."/>
            <person name="Miklos G.L.G."/>
            <person name="Abril J.F."/>
            <person name="Agbayani A."/>
            <person name="An H.-J."/>
            <person name="Andrews-Pfannkoch C."/>
            <person name="Baldwin D."/>
            <person name="Ballew R.M."/>
            <person name="Basu A."/>
            <person name="Baxendale J."/>
            <person name="Bayraktaroglu L."/>
            <person name="Beasley E.M."/>
            <person name="Beeson K.Y."/>
            <person name="Benos P.V."/>
            <person name="Berman B.P."/>
            <person name="Bhandari D."/>
            <person name="Bolshakov S."/>
            <person name="Borkova D."/>
            <person name="Botchan M.R."/>
            <person name="Bouck J."/>
            <person name="Brokstein P."/>
            <person name="Brottier P."/>
            <person name="Burtis K.C."/>
            <person name="Busam D.A."/>
            <person name="Butler H."/>
            <person name="Cadieu E."/>
            <person name="Center A."/>
            <person name="Chandra I."/>
            <person name="Cherry J.M."/>
            <person name="Cawley S."/>
            <person name="Dahlke C."/>
            <person name="Davenport L.B."/>
            <person name="Davies P."/>
            <person name="de Pablos B."/>
            <person name="Delcher A."/>
            <person name="Deng Z."/>
            <person name="Mays A.D."/>
            <person name="Dew I."/>
            <person name="Dietz S.M."/>
            <person name="Dodson K."/>
            <person name="Doup L.E."/>
            <person name="Downes M."/>
            <person name="Dugan-Rocha S."/>
            <person name="Dunkov B.C."/>
            <person name="Dunn P."/>
            <person name="Durbin K.J."/>
            <person name="Evangelista C.C."/>
            <person name="Ferraz C."/>
            <person name="Ferriera S."/>
            <person name="Fleischmann W."/>
            <person name="Fosler C."/>
            <person name="Gabrielian A.E."/>
            <person name="Garg N.S."/>
            <person name="Gelbart W.M."/>
            <person name="Glasser K."/>
            <person name="Glodek A."/>
            <person name="Gong F."/>
            <person name="Gorrell J.H."/>
            <person name="Gu Z."/>
            <person name="Guan P."/>
            <person name="Harris M."/>
            <person name="Harris N.L."/>
            <person name="Harvey D.A."/>
            <person name="Heiman T.J."/>
            <person name="Hernandez J.R."/>
            <person name="Houck J."/>
            <person name="Hostin D."/>
            <person name="Houston K.A."/>
            <person name="Howland T.J."/>
            <person name="Wei M.-H."/>
            <person name="Ibegwam C."/>
            <person name="Jalali M."/>
            <person name="Kalush F."/>
            <person name="Karpen G.H."/>
            <person name="Ke Z."/>
            <person name="Kennison J.A."/>
            <person name="Ketchum K.A."/>
            <person name="Kimmel B.E."/>
            <person name="Kodira C.D."/>
            <person name="Kraft C.L."/>
            <person name="Kravitz S."/>
            <person name="Kulp D."/>
            <person name="Lai Z."/>
            <person name="Lasko P."/>
            <person name="Lei Y."/>
            <person name="Levitsky A.A."/>
            <person name="Li J.H."/>
            <person name="Li Z."/>
            <person name="Liang Y."/>
            <person name="Lin X."/>
            <person name="Liu X."/>
            <person name="Mattei B."/>
            <person name="McIntosh T.C."/>
            <person name="McLeod M.P."/>
            <person name="McPherson D."/>
            <person name="Merkulov G."/>
            <person name="Milshina N.V."/>
            <person name="Mobarry C."/>
            <person name="Morris J."/>
            <person name="Moshrefi A."/>
            <person name="Mount S.M."/>
            <person name="Moy M."/>
            <person name="Murphy B."/>
            <person name="Murphy L."/>
            <person name="Muzny D.M."/>
            <person name="Nelson D.L."/>
            <person name="Nelson D.R."/>
            <person name="Nelson K.A."/>
            <person name="Nixon K."/>
            <person name="Nusskern D.R."/>
            <person name="Pacleb J.M."/>
            <person name="Palazzolo M."/>
            <person name="Pittman G.S."/>
            <person name="Pan S."/>
            <person name="Pollard J."/>
            <person name="Puri V."/>
            <person name="Reese M.G."/>
            <person name="Reinert K."/>
            <person name="Remington K."/>
            <person name="Saunders R.D.C."/>
            <person name="Scheeler F."/>
            <person name="Shen H."/>
            <person name="Shue B.C."/>
            <person name="Siden-Kiamos I."/>
            <person name="Simpson M."/>
            <person name="Skupski M.P."/>
            <person name="Smith T.J."/>
            <person name="Spier E."/>
            <person name="Spradling A.C."/>
            <person name="Stapleton M."/>
            <person name="Strong R."/>
            <person name="Sun E."/>
            <person name="Svirskas R."/>
            <person name="Tector C."/>
            <person name="Turner R."/>
            <person name="Venter E."/>
            <person name="Wang A.H."/>
            <person name="Wang X."/>
            <person name="Wang Z.-Y."/>
            <person name="Wassarman D.A."/>
            <person name="Weinstock G.M."/>
            <person name="Weissenbach J."/>
            <person name="Williams S.M."/>
            <person name="Woodage T."/>
            <person name="Worley K.C."/>
            <person name="Wu D."/>
            <person name="Yang S."/>
            <person name="Yao Q.A."/>
            <person name="Ye J."/>
            <person name="Yeh R.-F."/>
            <person name="Zaveri J.S."/>
            <person name="Zhan M."/>
            <person name="Zhang G."/>
            <person name="Zhao Q."/>
            <person name="Zheng L."/>
            <person name="Zheng X.H."/>
            <person name="Zhong F.N."/>
            <person name="Zhong W."/>
            <person name="Zhou X."/>
            <person name="Zhu S.C."/>
            <person name="Zhu X."/>
            <person name="Smith H.O."/>
            <person name="Gibbs R.A."/>
            <person name="Myers E.W."/>
            <person name="Rubin G.M."/>
            <person name="Venter J.C."/>
        </authorList>
    </citation>
    <scope>NUCLEOTIDE SEQUENCE [LARGE SCALE GENOMIC DNA]</scope>
    <source>
        <strain>Berkeley</strain>
    </source>
</reference>
<reference key="2">
    <citation type="journal article" date="2002" name="Genome Biol.">
        <title>Annotation of the Drosophila melanogaster euchromatic genome: a systematic review.</title>
        <authorList>
            <person name="Misra S."/>
            <person name="Crosby M.A."/>
            <person name="Mungall C.J."/>
            <person name="Matthews B.B."/>
            <person name="Campbell K.S."/>
            <person name="Hradecky P."/>
            <person name="Huang Y."/>
            <person name="Kaminker J.S."/>
            <person name="Millburn G.H."/>
            <person name="Prochnik S.E."/>
            <person name="Smith C.D."/>
            <person name="Tupy J.L."/>
            <person name="Whitfield E.J."/>
            <person name="Bayraktaroglu L."/>
            <person name="Berman B.P."/>
            <person name="Bettencourt B.R."/>
            <person name="Celniker S.E."/>
            <person name="de Grey A.D.N.J."/>
            <person name="Drysdale R.A."/>
            <person name="Harris N.L."/>
            <person name="Richter J."/>
            <person name="Russo S."/>
            <person name="Schroeder A.J."/>
            <person name="Shu S.Q."/>
            <person name="Stapleton M."/>
            <person name="Yamada C."/>
            <person name="Ashburner M."/>
            <person name="Gelbart W.M."/>
            <person name="Rubin G.M."/>
            <person name="Lewis S.E."/>
        </authorList>
    </citation>
    <scope>GENOME REANNOTATION</scope>
    <source>
        <strain>Berkeley</strain>
    </source>
</reference>
<reference key="3">
    <citation type="journal article" date="2002" name="Genome Biol.">
        <title>A Drosophila full-length cDNA resource.</title>
        <authorList>
            <person name="Stapleton M."/>
            <person name="Carlson J.W."/>
            <person name="Brokstein P."/>
            <person name="Yu C."/>
            <person name="Champe M."/>
            <person name="George R.A."/>
            <person name="Guarin H."/>
            <person name="Kronmiller B."/>
            <person name="Pacleb J.M."/>
            <person name="Park S."/>
            <person name="Wan K.H."/>
            <person name="Rubin G.M."/>
            <person name="Celniker S.E."/>
        </authorList>
    </citation>
    <scope>NUCLEOTIDE SEQUENCE [LARGE SCALE MRNA]</scope>
    <source>
        <strain>Berkeley</strain>
        <tissue>Embryo</tissue>
    </source>
</reference>
<dbReference type="EC" id="6.1.1.19" evidence="2"/>
<dbReference type="EMBL" id="AE014298">
    <property type="protein sequence ID" value="AAF48524.1"/>
    <property type="molecule type" value="Genomic_DNA"/>
</dbReference>
<dbReference type="EMBL" id="AY070924">
    <property type="protein sequence ID" value="AAL48546.1"/>
    <property type="molecule type" value="mRNA"/>
</dbReference>
<dbReference type="RefSeq" id="NP_573081.1">
    <property type="nucleotide sequence ID" value="NM_132853.3"/>
</dbReference>
<dbReference type="SMR" id="Q9VXN4"/>
<dbReference type="BioGRID" id="58887">
    <property type="interactions" value="9"/>
</dbReference>
<dbReference type="DIP" id="DIP-23738N"/>
<dbReference type="FunCoup" id="Q9VXN4">
    <property type="interactions" value="1430"/>
</dbReference>
<dbReference type="IntAct" id="Q9VXN4">
    <property type="interactions" value="66"/>
</dbReference>
<dbReference type="STRING" id="7227.FBpp0073965"/>
<dbReference type="PaxDb" id="7227-FBpp0073965"/>
<dbReference type="DNASU" id="32539"/>
<dbReference type="EnsemblMetazoa" id="FBtr0074178">
    <property type="protein sequence ID" value="FBpp0073965"/>
    <property type="gene ID" value="FBgn0027093"/>
</dbReference>
<dbReference type="GeneID" id="32539"/>
<dbReference type="KEGG" id="dme:Dmel_CG9020"/>
<dbReference type="AGR" id="FB:FBgn0027093"/>
<dbReference type="CTD" id="32539"/>
<dbReference type="FlyBase" id="FBgn0027093">
    <property type="gene designation" value="ArgRS"/>
</dbReference>
<dbReference type="VEuPathDB" id="VectorBase:FBgn0027093"/>
<dbReference type="eggNOG" id="KOG4426">
    <property type="taxonomic scope" value="Eukaryota"/>
</dbReference>
<dbReference type="GeneTree" id="ENSGT00530000063407"/>
<dbReference type="HOGENOM" id="CLU_006406_5_1_1"/>
<dbReference type="InParanoid" id="Q9VXN4"/>
<dbReference type="OMA" id="NKPLHLG"/>
<dbReference type="OrthoDB" id="68056at2759"/>
<dbReference type="PhylomeDB" id="Q9VXN4"/>
<dbReference type="Reactome" id="R-DME-9856649">
    <property type="pathway name" value="Transcriptional and post-translational regulation of MITF-M expression and activity"/>
</dbReference>
<dbReference type="BioGRID-ORCS" id="32539">
    <property type="hits" value="0 hits in 3 CRISPR screens"/>
</dbReference>
<dbReference type="GenomeRNAi" id="32539"/>
<dbReference type="PRO" id="PR:Q9VXN4"/>
<dbReference type="Proteomes" id="UP000000803">
    <property type="component" value="Chromosome X"/>
</dbReference>
<dbReference type="Bgee" id="FBgn0027093">
    <property type="expression patterns" value="Expressed in eye disc (Drosophila) and 81 other cell types or tissues"/>
</dbReference>
<dbReference type="GO" id="GO:0017101">
    <property type="term" value="C:aminoacyl-tRNA synthetase multienzyme complex"/>
    <property type="evidence" value="ECO:0000314"/>
    <property type="project" value="FlyBase"/>
</dbReference>
<dbReference type="GO" id="GO:0005737">
    <property type="term" value="C:cytoplasm"/>
    <property type="evidence" value="ECO:0000304"/>
    <property type="project" value="FlyBase"/>
</dbReference>
<dbReference type="GO" id="GO:0005829">
    <property type="term" value="C:cytosol"/>
    <property type="evidence" value="ECO:0007669"/>
    <property type="project" value="UniProtKB-SubCell"/>
</dbReference>
<dbReference type="GO" id="GO:0004814">
    <property type="term" value="F:arginine-tRNA ligase activity"/>
    <property type="evidence" value="ECO:0000318"/>
    <property type="project" value="GO_Central"/>
</dbReference>
<dbReference type="GO" id="GO:0005524">
    <property type="term" value="F:ATP binding"/>
    <property type="evidence" value="ECO:0007669"/>
    <property type="project" value="UniProtKB-KW"/>
</dbReference>
<dbReference type="GO" id="GO:0006420">
    <property type="term" value="P:arginyl-tRNA aminoacylation"/>
    <property type="evidence" value="ECO:0000318"/>
    <property type="project" value="GO_Central"/>
</dbReference>
<dbReference type="CDD" id="cd00671">
    <property type="entry name" value="ArgRS_core"/>
    <property type="match status" value="1"/>
</dbReference>
<dbReference type="FunFam" id="3.30.1360.70:FF:000002">
    <property type="entry name" value="arginine--tRNA ligase, cytoplasmic"/>
    <property type="match status" value="1"/>
</dbReference>
<dbReference type="FunFam" id="3.40.50.620:FF:000084">
    <property type="entry name" value="arginine--tRNA ligase, cytoplasmic"/>
    <property type="match status" value="1"/>
</dbReference>
<dbReference type="FunFam" id="1.10.730.10:FF:000087">
    <property type="entry name" value="probable arginine--tRNA ligase, cytoplasmic"/>
    <property type="match status" value="1"/>
</dbReference>
<dbReference type="Gene3D" id="3.30.1360.70">
    <property type="entry name" value="Arginyl tRNA synthetase N-terminal domain"/>
    <property type="match status" value="1"/>
</dbReference>
<dbReference type="Gene3D" id="3.40.50.620">
    <property type="entry name" value="HUPs"/>
    <property type="match status" value="1"/>
</dbReference>
<dbReference type="Gene3D" id="1.10.730.10">
    <property type="entry name" value="Isoleucyl-tRNA Synthetase, Domain 1"/>
    <property type="match status" value="1"/>
</dbReference>
<dbReference type="HAMAP" id="MF_00123">
    <property type="entry name" value="Arg_tRNA_synth"/>
    <property type="match status" value="1"/>
</dbReference>
<dbReference type="InterPro" id="IPR001412">
    <property type="entry name" value="aa-tRNA-synth_I_CS"/>
</dbReference>
<dbReference type="InterPro" id="IPR001278">
    <property type="entry name" value="Arg-tRNA-ligase"/>
</dbReference>
<dbReference type="InterPro" id="IPR005148">
    <property type="entry name" value="Arg-tRNA-synth_N"/>
</dbReference>
<dbReference type="InterPro" id="IPR036695">
    <property type="entry name" value="Arg-tRNA-synth_N_sf"/>
</dbReference>
<dbReference type="InterPro" id="IPR035684">
    <property type="entry name" value="ArgRS_core"/>
</dbReference>
<dbReference type="InterPro" id="IPR008909">
    <property type="entry name" value="DALR_anticod-bd"/>
</dbReference>
<dbReference type="InterPro" id="IPR014729">
    <property type="entry name" value="Rossmann-like_a/b/a_fold"/>
</dbReference>
<dbReference type="InterPro" id="IPR009080">
    <property type="entry name" value="tRNAsynth_Ia_anticodon-bd"/>
</dbReference>
<dbReference type="NCBIfam" id="TIGR00456">
    <property type="entry name" value="argS"/>
    <property type="match status" value="1"/>
</dbReference>
<dbReference type="PANTHER" id="PTHR11956:SF5">
    <property type="entry name" value="ARGININE--TRNA LIGASE, CYTOPLASMIC"/>
    <property type="match status" value="1"/>
</dbReference>
<dbReference type="PANTHER" id="PTHR11956">
    <property type="entry name" value="ARGINYL-TRNA SYNTHETASE"/>
    <property type="match status" value="1"/>
</dbReference>
<dbReference type="Pfam" id="PF03485">
    <property type="entry name" value="Arg_tRNA_synt_N"/>
    <property type="match status" value="1"/>
</dbReference>
<dbReference type="Pfam" id="PF05746">
    <property type="entry name" value="DALR_1"/>
    <property type="match status" value="1"/>
</dbReference>
<dbReference type="Pfam" id="PF00750">
    <property type="entry name" value="tRNA-synt_1d"/>
    <property type="match status" value="1"/>
</dbReference>
<dbReference type="PRINTS" id="PR01038">
    <property type="entry name" value="TRNASYNTHARG"/>
</dbReference>
<dbReference type="SMART" id="SM01016">
    <property type="entry name" value="Arg_tRNA_synt_N"/>
    <property type="match status" value="1"/>
</dbReference>
<dbReference type="SMART" id="SM00836">
    <property type="entry name" value="DALR_1"/>
    <property type="match status" value="1"/>
</dbReference>
<dbReference type="SUPFAM" id="SSF47323">
    <property type="entry name" value="Anticodon-binding domain of a subclass of class I aminoacyl-tRNA synthetases"/>
    <property type="match status" value="1"/>
</dbReference>
<dbReference type="SUPFAM" id="SSF55190">
    <property type="entry name" value="Arginyl-tRNA synthetase (ArgRS), N-terminal 'additional' domain"/>
    <property type="match status" value="1"/>
</dbReference>
<dbReference type="SUPFAM" id="SSF52374">
    <property type="entry name" value="Nucleotidylyl transferase"/>
    <property type="match status" value="1"/>
</dbReference>
<dbReference type="PROSITE" id="PS00178">
    <property type="entry name" value="AA_TRNA_LIGASE_I"/>
    <property type="match status" value="1"/>
</dbReference>
<protein>
    <recommendedName>
        <fullName>Probable arginine--tRNA ligase, cytoplasmic</fullName>
        <ecNumber evidence="2">6.1.1.19</ecNumber>
    </recommendedName>
    <alternativeName>
        <fullName evidence="5">Arginyl-tRNA synthetase</fullName>
    </alternativeName>
</protein>
<name>SYRC_DROME</name>
<comment type="function">
    <text evidence="1">Forms part of a macromolecular complex that catalyzes the attachment of specific amino acids to cognate tRNAs during protein synthesis.</text>
</comment>
<comment type="catalytic activity">
    <reaction evidence="2">
        <text>tRNA(Arg) + L-arginine + ATP = L-arginyl-tRNA(Arg) + AMP + diphosphate</text>
        <dbReference type="Rhea" id="RHEA:20301"/>
        <dbReference type="Rhea" id="RHEA-COMP:9658"/>
        <dbReference type="Rhea" id="RHEA-COMP:9673"/>
        <dbReference type="ChEBI" id="CHEBI:30616"/>
        <dbReference type="ChEBI" id="CHEBI:32682"/>
        <dbReference type="ChEBI" id="CHEBI:33019"/>
        <dbReference type="ChEBI" id="CHEBI:78442"/>
        <dbReference type="ChEBI" id="CHEBI:78513"/>
        <dbReference type="ChEBI" id="CHEBI:456215"/>
        <dbReference type="EC" id="6.1.1.19"/>
    </reaction>
</comment>
<comment type="subcellular location">
    <subcellularLocation>
        <location evidence="2">Cytoplasm</location>
    </subcellularLocation>
    <subcellularLocation>
        <location evidence="2">Cytoplasm</location>
        <location evidence="2">Cytosol</location>
    </subcellularLocation>
</comment>
<comment type="similarity">
    <text evidence="4">Belongs to the class-I aminoacyl-tRNA synthetase family.</text>
</comment>
<proteinExistence type="evidence at transcript level"/>
<organism>
    <name type="scientific">Drosophila melanogaster</name>
    <name type="common">Fruit fly</name>
    <dbReference type="NCBI Taxonomy" id="7227"/>
    <lineage>
        <taxon>Eukaryota</taxon>
        <taxon>Metazoa</taxon>
        <taxon>Ecdysozoa</taxon>
        <taxon>Arthropoda</taxon>
        <taxon>Hexapoda</taxon>
        <taxon>Insecta</taxon>
        <taxon>Pterygota</taxon>
        <taxon>Neoptera</taxon>
        <taxon>Endopterygota</taxon>
        <taxon>Diptera</taxon>
        <taxon>Brachycera</taxon>
        <taxon>Muscomorpha</taxon>
        <taxon>Ephydroidea</taxon>
        <taxon>Drosophilidae</taxon>
        <taxon>Drosophila</taxon>
        <taxon>Sophophora</taxon>
    </lineage>
</organism>
<evidence type="ECO:0000250" key="1"/>
<evidence type="ECO:0000250" key="2">
    <source>
        <dbReference type="UniProtKB" id="P54136"/>
    </source>
</evidence>
<evidence type="ECO:0000250" key="3">
    <source>
        <dbReference type="UniProtKB" id="Q05506"/>
    </source>
</evidence>
<evidence type="ECO:0000305" key="4"/>
<evidence type="ECO:0000312" key="5">
    <source>
        <dbReference type="FlyBase" id="FBgn0027093"/>
    </source>
</evidence>
<accession>Q9VXN4</accession>